<name>MKRN2_MOUSE</name>
<comment type="function">
    <text evidence="5 6">E3 ubiquitin ligase catalyzing the covalent attachment of ubiquitin moieties onto substrate proteins (PubMed:28378844). Promotes the polyubiquitination and proteasome-dependent degradation of RELA/p65, thereby suppressing RELA-mediated NF-kappa-B transactivation and negatively regulating inflammatory responses (PubMed:28378844). Plays a role in the regulation of spermiation and in male fertility (PubMed:28008940).</text>
</comment>
<comment type="catalytic activity">
    <reaction evidence="6">
        <text>S-ubiquitinyl-[E2 ubiquitin-conjugating enzyme]-L-cysteine + [acceptor protein]-L-lysine = [E2 ubiquitin-conjugating enzyme]-L-cysteine + N(6)-ubiquitinyl-[acceptor protein]-L-lysine.</text>
        <dbReference type="EC" id="2.3.2.27"/>
    </reaction>
</comment>
<comment type="pathway">
    <text>Protein modification; protein ubiquitination.</text>
</comment>
<comment type="subunit">
    <text evidence="6">Interacts with PDLIM2 (via LIM zinc-binding domain) (PubMed:28378844). Interacts with RELA (PubMed:28378844).</text>
</comment>
<comment type="subcellular location">
    <subcellularLocation>
        <location evidence="6">Cytoplasm</location>
    </subcellularLocation>
    <subcellularLocation>
        <location evidence="6">Nucleus</location>
    </subcellularLocation>
</comment>
<comment type="tissue specificity">
    <text evidence="5 6">Highly expressed in the testis, and lower expression in the brain, thymus, heart, lung, liver, spleen, kidney, ovary, uterus, and seminal vesicle (at protein level) (PubMed:28008940). Expressed in primary immune cells, such as CD4-positive and CD8-positive T cells, CD19-positive B cells and CD11c-positive dendritic cells, and in embryonic fibroblasts (at protein level) (PubMed:28378844).</text>
</comment>
<comment type="disruption phenotype">
    <text evidence="5">Male and female knockout mice are viable with a lighter birthweight than wild-type animals (PubMed:28008940). Causes infertility in male mice, whereas female mice are fertile, but display reduced fecundity (PubMed:28008940). Leads to abnormal sperms characterized by low number, poor motility, and aberrant morphology (PubMed:28008940). Sperms have deformed heads with abnormal or missing acrosomes, disorganized axonemal structure, and disorganized flagellar structure (PubMed:28008940). Complete loss of the axoneme doublets in one side of the fibrous sheath and disordered assembly of axoneme doublets (PubMed:28008940). Causes failure of sperm release (spermiation failure) and misarrangement of ectoplasmic specialization in testes, thus impairing spermiogenesis and spermiation (PubMed:28008940). Disrupted arrangement of ectoplasmic specialization, the adhesion junction found in Sertoli cells at sites of attachment to elongated spermatids or neighboring Sertoli cells in the testes, and decreased expression of Espn (PubMed:28008940). The outer dense fiber, which is an important component of flagellae, is absent or improperly arranged in epididymal sperms (PubMed:28008940). Decreased expression levels of Odf2 in spermatogenesis (PubMed:28008940).</text>
</comment>
<organism>
    <name type="scientific">Mus musculus</name>
    <name type="common">Mouse</name>
    <dbReference type="NCBI Taxonomy" id="10090"/>
    <lineage>
        <taxon>Eukaryota</taxon>
        <taxon>Metazoa</taxon>
        <taxon>Chordata</taxon>
        <taxon>Craniata</taxon>
        <taxon>Vertebrata</taxon>
        <taxon>Euteleostomi</taxon>
        <taxon>Mammalia</taxon>
        <taxon>Eutheria</taxon>
        <taxon>Euarchontoglires</taxon>
        <taxon>Glires</taxon>
        <taxon>Rodentia</taxon>
        <taxon>Myomorpha</taxon>
        <taxon>Muroidea</taxon>
        <taxon>Muridae</taxon>
        <taxon>Murinae</taxon>
        <taxon>Mus</taxon>
        <taxon>Mus</taxon>
    </lineage>
</organism>
<proteinExistence type="evidence at protein level"/>
<evidence type="ECO:0000250" key="1">
    <source>
        <dbReference type="UniProtKB" id="Q9H000"/>
    </source>
</evidence>
<evidence type="ECO:0000255" key="2">
    <source>
        <dbReference type="PROSITE-ProRule" id="PRU00175"/>
    </source>
</evidence>
<evidence type="ECO:0000255" key="3">
    <source>
        <dbReference type="PROSITE-ProRule" id="PRU00723"/>
    </source>
</evidence>
<evidence type="ECO:0000256" key="4">
    <source>
        <dbReference type="SAM" id="MobiDB-lite"/>
    </source>
</evidence>
<evidence type="ECO:0000269" key="5">
    <source>
    </source>
</evidence>
<evidence type="ECO:0000269" key="6">
    <source>
    </source>
</evidence>
<evidence type="ECO:0000305" key="7"/>
<gene>
    <name type="primary">Mkrn2</name>
</gene>
<sequence length="416" mass="46597">MSTKQVTCRYFMHGVCREGSQCLFSHDLANSKPSTICKYYQKGYCAYGARCRYDHTKPPAAAGGAVGPAPNPSPSSGLHSPHPSPDIATSVMRTHSNEPGKREKKTLVLRDRNLTGLAEDKTPPSKVNNPGGCSDPQTSPEMKPHSYLDAIRTGLDDLEASSSYSNEPQLCPYAAAGECRFGDACVYLHGDMCEICRLQVLHPFDPEQRKAHEKMCMSTFEHEMEKAFAFQASQDKVCSICMEVILEKASASERRFGILSNCSHTYCLSCIRQWRCAKQFENPIIKSCPECRVISEFVIPSVYWVEDQNKKNELIEAFKQGMGKKACKYFEQGKGTCPFGSKCLYRHAYPDGRLAEPEKPRKQLSSEGTVRFFNSVRLWDFIENRETRQVPSTDDVDVTELGDLFMHLSGVESSEP</sequence>
<dbReference type="EC" id="2.3.2.27" evidence="6"/>
<dbReference type="EMBL" id="AF277171">
    <property type="protein sequence ID" value="AAG27596.1"/>
    <property type="molecule type" value="mRNA"/>
</dbReference>
<dbReference type="EMBL" id="AK011295">
    <property type="protein sequence ID" value="BAB27523.1"/>
    <property type="molecule type" value="mRNA"/>
</dbReference>
<dbReference type="EMBL" id="AK077926">
    <property type="protein sequence ID" value="BAC37068.1"/>
    <property type="molecule type" value="mRNA"/>
</dbReference>
<dbReference type="EMBL" id="CH466523">
    <property type="protein sequence ID" value="EDK99532.1"/>
    <property type="molecule type" value="Genomic_DNA"/>
</dbReference>
<dbReference type="EMBL" id="BC025547">
    <property type="protein sequence ID" value="AAH25547.1"/>
    <property type="molecule type" value="mRNA"/>
</dbReference>
<dbReference type="CCDS" id="CCDS39600.1"/>
<dbReference type="RefSeq" id="NP_075779.2">
    <property type="nucleotide sequence ID" value="NM_023290.3"/>
</dbReference>
<dbReference type="BioGRID" id="211885">
    <property type="interactions" value="4"/>
</dbReference>
<dbReference type="FunCoup" id="Q9ERV1">
    <property type="interactions" value="4191"/>
</dbReference>
<dbReference type="STRING" id="10090.ENSMUSP00000000449"/>
<dbReference type="iPTMnet" id="Q9ERV1"/>
<dbReference type="PhosphoSitePlus" id="Q9ERV1"/>
<dbReference type="jPOST" id="Q9ERV1"/>
<dbReference type="PaxDb" id="10090-ENSMUSP00000000449"/>
<dbReference type="PeptideAtlas" id="Q9ERV1"/>
<dbReference type="ProteomicsDB" id="252574"/>
<dbReference type="Pumba" id="Q9ERV1"/>
<dbReference type="Antibodypedia" id="26240">
    <property type="antibodies" value="297 antibodies from 27 providers"/>
</dbReference>
<dbReference type="DNASU" id="67027"/>
<dbReference type="Ensembl" id="ENSMUST00000000449.9">
    <property type="protein sequence ID" value="ENSMUSP00000000449.8"/>
    <property type="gene ID" value="ENSMUSG00000000439.10"/>
</dbReference>
<dbReference type="GeneID" id="67027"/>
<dbReference type="KEGG" id="mmu:67027"/>
<dbReference type="UCSC" id="uc009diw.1">
    <property type="organism name" value="mouse"/>
</dbReference>
<dbReference type="AGR" id="MGI:1914277"/>
<dbReference type="CTD" id="23609"/>
<dbReference type="MGI" id="MGI:1914277">
    <property type="gene designation" value="Mkrn2"/>
</dbReference>
<dbReference type="VEuPathDB" id="HostDB:ENSMUSG00000000439"/>
<dbReference type="eggNOG" id="KOG1039">
    <property type="taxonomic scope" value="Eukaryota"/>
</dbReference>
<dbReference type="GeneTree" id="ENSGT00950000183077"/>
<dbReference type="HOGENOM" id="CLU_040815_0_1_1"/>
<dbReference type="InParanoid" id="Q9ERV1"/>
<dbReference type="OMA" id="EKVCMAT"/>
<dbReference type="OrthoDB" id="411372at2759"/>
<dbReference type="PhylomeDB" id="Q9ERV1"/>
<dbReference type="TreeFam" id="TF315108"/>
<dbReference type="UniPathway" id="UPA00143"/>
<dbReference type="BioGRID-ORCS" id="67027">
    <property type="hits" value="9 hits in 62 CRISPR screens"/>
</dbReference>
<dbReference type="ChiTaRS" id="Mkrn2">
    <property type="organism name" value="mouse"/>
</dbReference>
<dbReference type="PRO" id="PR:Q9ERV1"/>
<dbReference type="Proteomes" id="UP000000589">
    <property type="component" value="Chromosome 6"/>
</dbReference>
<dbReference type="RNAct" id="Q9ERV1">
    <property type="molecule type" value="protein"/>
</dbReference>
<dbReference type="Bgee" id="ENSMUSG00000000439">
    <property type="expression patterns" value="Expressed in temporalis muscle and 255 other cell types or tissues"/>
</dbReference>
<dbReference type="GO" id="GO:0005737">
    <property type="term" value="C:cytoplasm"/>
    <property type="evidence" value="ECO:0000314"/>
    <property type="project" value="UniProtKB"/>
</dbReference>
<dbReference type="GO" id="GO:0005634">
    <property type="term" value="C:nucleus"/>
    <property type="evidence" value="ECO:0000314"/>
    <property type="project" value="UniProtKB"/>
</dbReference>
<dbReference type="GO" id="GO:0061630">
    <property type="term" value="F:ubiquitin protein ligase activity"/>
    <property type="evidence" value="ECO:0000314"/>
    <property type="project" value="UniProtKB"/>
</dbReference>
<dbReference type="GO" id="GO:0008270">
    <property type="term" value="F:zinc ion binding"/>
    <property type="evidence" value="ECO:0007669"/>
    <property type="project" value="UniProtKB-KW"/>
</dbReference>
<dbReference type="GO" id="GO:0030154">
    <property type="term" value="P:cell differentiation"/>
    <property type="evidence" value="ECO:0007669"/>
    <property type="project" value="UniProtKB-KW"/>
</dbReference>
<dbReference type="GO" id="GO:0006351">
    <property type="term" value="P:DNA-templated transcription"/>
    <property type="evidence" value="ECO:0000250"/>
    <property type="project" value="UniProtKB"/>
</dbReference>
<dbReference type="GO" id="GO:0002862">
    <property type="term" value="P:negative regulation of inflammatory response to antigenic stimulus"/>
    <property type="evidence" value="ECO:0000315"/>
    <property type="project" value="UniProtKB"/>
</dbReference>
<dbReference type="GO" id="GO:1901223">
    <property type="term" value="P:negative regulation of non-canonical NF-kappaB signal transduction"/>
    <property type="evidence" value="ECO:0000314"/>
    <property type="project" value="UniProtKB"/>
</dbReference>
<dbReference type="GO" id="GO:0043491">
    <property type="term" value="P:phosphatidylinositol 3-kinase/protein kinase B signal transduction"/>
    <property type="evidence" value="ECO:0000250"/>
    <property type="project" value="UniProtKB"/>
</dbReference>
<dbReference type="GO" id="GO:0045944">
    <property type="term" value="P:positive regulation of transcription by RNA polymerase II"/>
    <property type="evidence" value="ECO:0000250"/>
    <property type="project" value="UniProtKB"/>
</dbReference>
<dbReference type="GO" id="GO:0000209">
    <property type="term" value="P:protein polyubiquitination"/>
    <property type="evidence" value="ECO:0007669"/>
    <property type="project" value="InterPro"/>
</dbReference>
<dbReference type="GO" id="GO:0007283">
    <property type="term" value="P:spermatogenesis"/>
    <property type="evidence" value="ECO:0007669"/>
    <property type="project" value="UniProtKB-KW"/>
</dbReference>
<dbReference type="GO" id="GO:0006511">
    <property type="term" value="P:ubiquitin-dependent protein catabolic process"/>
    <property type="evidence" value="ECO:0000314"/>
    <property type="project" value="UniProtKB"/>
</dbReference>
<dbReference type="CDD" id="cd16731">
    <property type="entry name" value="RING-HC_MKRN2"/>
    <property type="match status" value="1"/>
</dbReference>
<dbReference type="FunFam" id="3.30.40.10:FF:000117">
    <property type="entry name" value="Probable E3 ubiquitin-protein ligase makorin-1"/>
    <property type="match status" value="1"/>
</dbReference>
<dbReference type="Gene3D" id="2.30.30.1190">
    <property type="match status" value="1"/>
</dbReference>
<dbReference type="Gene3D" id="1.20.120.1350">
    <property type="entry name" value="Pneumovirus matrix protein 2 (M2), zinc-binding domain"/>
    <property type="match status" value="1"/>
</dbReference>
<dbReference type="Gene3D" id="4.10.1000.10">
    <property type="entry name" value="Zinc finger, CCCH-type"/>
    <property type="match status" value="1"/>
</dbReference>
<dbReference type="Gene3D" id="3.30.40.10">
    <property type="entry name" value="Zinc/RING finger domain, C3HC4 (zinc finger)"/>
    <property type="match status" value="1"/>
</dbReference>
<dbReference type="InterPro" id="IPR045072">
    <property type="entry name" value="MKRN-like"/>
</dbReference>
<dbReference type="InterPro" id="IPR000571">
    <property type="entry name" value="Znf_CCCH"/>
</dbReference>
<dbReference type="InterPro" id="IPR036855">
    <property type="entry name" value="Znf_CCCH_sf"/>
</dbReference>
<dbReference type="InterPro" id="IPR001841">
    <property type="entry name" value="Znf_RING"/>
</dbReference>
<dbReference type="InterPro" id="IPR013083">
    <property type="entry name" value="Znf_RING/FYVE/PHD"/>
</dbReference>
<dbReference type="InterPro" id="IPR017907">
    <property type="entry name" value="Znf_RING_CS"/>
</dbReference>
<dbReference type="PANTHER" id="PTHR11224:SF17">
    <property type="entry name" value="E3 UBIQUITIN-PROTEIN LIGASE MAKORIN-2"/>
    <property type="match status" value="1"/>
</dbReference>
<dbReference type="PANTHER" id="PTHR11224">
    <property type="entry name" value="MAKORIN-RELATED"/>
    <property type="match status" value="1"/>
</dbReference>
<dbReference type="Pfam" id="PF00642">
    <property type="entry name" value="zf-CCCH"/>
    <property type="match status" value="3"/>
</dbReference>
<dbReference type="Pfam" id="PF14608">
    <property type="entry name" value="zf-CCCH_2"/>
    <property type="match status" value="1"/>
</dbReference>
<dbReference type="SMART" id="SM00184">
    <property type="entry name" value="RING"/>
    <property type="match status" value="1"/>
</dbReference>
<dbReference type="SMART" id="SM00356">
    <property type="entry name" value="ZnF_C3H1"/>
    <property type="match status" value="4"/>
</dbReference>
<dbReference type="SUPFAM" id="SSF90229">
    <property type="entry name" value="CCCH zinc finger"/>
    <property type="match status" value="2"/>
</dbReference>
<dbReference type="SUPFAM" id="SSF57850">
    <property type="entry name" value="RING/U-box"/>
    <property type="match status" value="1"/>
</dbReference>
<dbReference type="PROSITE" id="PS50103">
    <property type="entry name" value="ZF_C3H1"/>
    <property type="match status" value="4"/>
</dbReference>
<dbReference type="PROSITE" id="PS00518">
    <property type="entry name" value="ZF_RING_1"/>
    <property type="match status" value="1"/>
</dbReference>
<dbReference type="PROSITE" id="PS50089">
    <property type="entry name" value="ZF_RING_2"/>
    <property type="match status" value="1"/>
</dbReference>
<reference key="1">
    <citation type="journal article" date="2001" name="Genomics">
        <title>Phylogenetic conservation of the makorin-2 gene, encoding a multiple zinc-finger protein, antisense to the raf1 proto-oncogene.</title>
        <authorList>
            <person name="Gray T.A."/>
            <person name="Azama K."/>
            <person name="Whitmore K."/>
            <person name="Min A."/>
            <person name="Abe S."/>
            <person name="Nicholls R.D."/>
        </authorList>
    </citation>
    <scope>NUCLEOTIDE SEQUENCE [MRNA]</scope>
</reference>
<reference key="2">
    <citation type="journal article" date="2005" name="Science">
        <title>The transcriptional landscape of the mammalian genome.</title>
        <authorList>
            <person name="Carninci P."/>
            <person name="Kasukawa T."/>
            <person name="Katayama S."/>
            <person name="Gough J."/>
            <person name="Frith M.C."/>
            <person name="Maeda N."/>
            <person name="Oyama R."/>
            <person name="Ravasi T."/>
            <person name="Lenhard B."/>
            <person name="Wells C."/>
            <person name="Kodzius R."/>
            <person name="Shimokawa K."/>
            <person name="Bajic V.B."/>
            <person name="Brenner S.E."/>
            <person name="Batalov S."/>
            <person name="Forrest A.R."/>
            <person name="Zavolan M."/>
            <person name="Davis M.J."/>
            <person name="Wilming L.G."/>
            <person name="Aidinis V."/>
            <person name="Allen J.E."/>
            <person name="Ambesi-Impiombato A."/>
            <person name="Apweiler R."/>
            <person name="Aturaliya R.N."/>
            <person name="Bailey T.L."/>
            <person name="Bansal M."/>
            <person name="Baxter L."/>
            <person name="Beisel K.W."/>
            <person name="Bersano T."/>
            <person name="Bono H."/>
            <person name="Chalk A.M."/>
            <person name="Chiu K.P."/>
            <person name="Choudhary V."/>
            <person name="Christoffels A."/>
            <person name="Clutterbuck D.R."/>
            <person name="Crowe M.L."/>
            <person name="Dalla E."/>
            <person name="Dalrymple B.P."/>
            <person name="de Bono B."/>
            <person name="Della Gatta G."/>
            <person name="di Bernardo D."/>
            <person name="Down T."/>
            <person name="Engstrom P."/>
            <person name="Fagiolini M."/>
            <person name="Faulkner G."/>
            <person name="Fletcher C.F."/>
            <person name="Fukushima T."/>
            <person name="Furuno M."/>
            <person name="Futaki S."/>
            <person name="Gariboldi M."/>
            <person name="Georgii-Hemming P."/>
            <person name="Gingeras T.R."/>
            <person name="Gojobori T."/>
            <person name="Green R.E."/>
            <person name="Gustincich S."/>
            <person name="Harbers M."/>
            <person name="Hayashi Y."/>
            <person name="Hensch T.K."/>
            <person name="Hirokawa N."/>
            <person name="Hill D."/>
            <person name="Huminiecki L."/>
            <person name="Iacono M."/>
            <person name="Ikeo K."/>
            <person name="Iwama A."/>
            <person name="Ishikawa T."/>
            <person name="Jakt M."/>
            <person name="Kanapin A."/>
            <person name="Katoh M."/>
            <person name="Kawasawa Y."/>
            <person name="Kelso J."/>
            <person name="Kitamura H."/>
            <person name="Kitano H."/>
            <person name="Kollias G."/>
            <person name="Krishnan S.P."/>
            <person name="Kruger A."/>
            <person name="Kummerfeld S.K."/>
            <person name="Kurochkin I.V."/>
            <person name="Lareau L.F."/>
            <person name="Lazarevic D."/>
            <person name="Lipovich L."/>
            <person name="Liu J."/>
            <person name="Liuni S."/>
            <person name="McWilliam S."/>
            <person name="Madan Babu M."/>
            <person name="Madera M."/>
            <person name="Marchionni L."/>
            <person name="Matsuda H."/>
            <person name="Matsuzawa S."/>
            <person name="Miki H."/>
            <person name="Mignone F."/>
            <person name="Miyake S."/>
            <person name="Morris K."/>
            <person name="Mottagui-Tabar S."/>
            <person name="Mulder N."/>
            <person name="Nakano N."/>
            <person name="Nakauchi H."/>
            <person name="Ng P."/>
            <person name="Nilsson R."/>
            <person name="Nishiguchi S."/>
            <person name="Nishikawa S."/>
            <person name="Nori F."/>
            <person name="Ohara O."/>
            <person name="Okazaki Y."/>
            <person name="Orlando V."/>
            <person name="Pang K.C."/>
            <person name="Pavan W.J."/>
            <person name="Pavesi G."/>
            <person name="Pesole G."/>
            <person name="Petrovsky N."/>
            <person name="Piazza S."/>
            <person name="Reed J."/>
            <person name="Reid J.F."/>
            <person name="Ring B.Z."/>
            <person name="Ringwald M."/>
            <person name="Rost B."/>
            <person name="Ruan Y."/>
            <person name="Salzberg S.L."/>
            <person name="Sandelin A."/>
            <person name="Schneider C."/>
            <person name="Schoenbach C."/>
            <person name="Sekiguchi K."/>
            <person name="Semple C.A."/>
            <person name="Seno S."/>
            <person name="Sessa L."/>
            <person name="Sheng Y."/>
            <person name="Shibata Y."/>
            <person name="Shimada H."/>
            <person name="Shimada K."/>
            <person name="Silva D."/>
            <person name="Sinclair B."/>
            <person name="Sperling S."/>
            <person name="Stupka E."/>
            <person name="Sugiura K."/>
            <person name="Sultana R."/>
            <person name="Takenaka Y."/>
            <person name="Taki K."/>
            <person name="Tammoja K."/>
            <person name="Tan S.L."/>
            <person name="Tang S."/>
            <person name="Taylor M.S."/>
            <person name="Tegner J."/>
            <person name="Teichmann S.A."/>
            <person name="Ueda H.R."/>
            <person name="van Nimwegen E."/>
            <person name="Verardo R."/>
            <person name="Wei C.L."/>
            <person name="Yagi K."/>
            <person name="Yamanishi H."/>
            <person name="Zabarovsky E."/>
            <person name="Zhu S."/>
            <person name="Zimmer A."/>
            <person name="Hide W."/>
            <person name="Bult C."/>
            <person name="Grimmond S.M."/>
            <person name="Teasdale R.D."/>
            <person name="Liu E.T."/>
            <person name="Brusic V."/>
            <person name="Quackenbush J."/>
            <person name="Wahlestedt C."/>
            <person name="Mattick J.S."/>
            <person name="Hume D.A."/>
            <person name="Kai C."/>
            <person name="Sasaki D."/>
            <person name="Tomaru Y."/>
            <person name="Fukuda S."/>
            <person name="Kanamori-Katayama M."/>
            <person name="Suzuki M."/>
            <person name="Aoki J."/>
            <person name="Arakawa T."/>
            <person name="Iida J."/>
            <person name="Imamura K."/>
            <person name="Itoh M."/>
            <person name="Kato T."/>
            <person name="Kawaji H."/>
            <person name="Kawagashira N."/>
            <person name="Kawashima T."/>
            <person name="Kojima M."/>
            <person name="Kondo S."/>
            <person name="Konno H."/>
            <person name="Nakano K."/>
            <person name="Ninomiya N."/>
            <person name="Nishio T."/>
            <person name="Okada M."/>
            <person name="Plessy C."/>
            <person name="Shibata K."/>
            <person name="Shiraki T."/>
            <person name="Suzuki S."/>
            <person name="Tagami M."/>
            <person name="Waki K."/>
            <person name="Watahiki A."/>
            <person name="Okamura-Oho Y."/>
            <person name="Suzuki H."/>
            <person name="Kawai J."/>
            <person name="Hayashizaki Y."/>
        </authorList>
    </citation>
    <scope>NUCLEOTIDE SEQUENCE [LARGE SCALE MRNA]</scope>
    <source>
        <strain>C57BL/6J</strain>
        <tissue>Embryo</tissue>
    </source>
</reference>
<reference key="3">
    <citation type="submission" date="2005-07" db="EMBL/GenBank/DDBJ databases">
        <authorList>
            <person name="Mural R.J."/>
            <person name="Adams M.D."/>
            <person name="Myers E.W."/>
            <person name="Smith H.O."/>
            <person name="Venter J.C."/>
        </authorList>
    </citation>
    <scope>NUCLEOTIDE SEQUENCE [LARGE SCALE GENOMIC DNA]</scope>
</reference>
<reference key="4">
    <citation type="journal article" date="2004" name="Genome Res.">
        <title>The status, quality, and expansion of the NIH full-length cDNA project: the Mammalian Gene Collection (MGC).</title>
        <authorList>
            <consortium name="The MGC Project Team"/>
        </authorList>
    </citation>
    <scope>NUCLEOTIDE SEQUENCE [LARGE SCALE MRNA]</scope>
    <source>
        <strain>FVB/N</strain>
        <tissue>Mammary tumor</tissue>
    </source>
</reference>
<reference key="5">
    <citation type="journal article" date="2010" name="Cell">
        <title>A tissue-specific atlas of mouse protein phosphorylation and expression.</title>
        <authorList>
            <person name="Huttlin E.L."/>
            <person name="Jedrychowski M.P."/>
            <person name="Elias J.E."/>
            <person name="Goswami T."/>
            <person name="Rad R."/>
            <person name="Beausoleil S.A."/>
            <person name="Villen J."/>
            <person name="Haas W."/>
            <person name="Sowa M.E."/>
            <person name="Gygi S.P."/>
        </authorList>
    </citation>
    <scope>IDENTIFICATION BY MASS SPECTROMETRY [LARGE SCALE ANALYSIS]</scope>
    <source>
        <tissue>Brown adipose tissue</tissue>
        <tissue>Kidney</tissue>
    </source>
</reference>
<reference key="6">
    <citation type="journal article" date="2016" name="Sci. Rep.">
        <title>Deficiency of Mkrn2 causes abnormal spermiogenesis and spermiation, and impairs male fertility.</title>
        <authorList>
            <person name="Qian X."/>
            <person name="Wang L."/>
            <person name="Zheng B."/>
            <person name="Shi Z.M."/>
            <person name="Ge X."/>
            <person name="Jiang C.F."/>
            <person name="Qian Y.C."/>
            <person name="Li D.M."/>
            <person name="Li W."/>
            <person name="Liu X."/>
            <person name="Yin Y."/>
            <person name="Zheng J.T."/>
            <person name="Shen H."/>
            <person name="Wang M."/>
            <person name="Guo X.J."/>
            <person name="He J."/>
            <person name="Lin M."/>
            <person name="Liu L.Z."/>
            <person name="Sha J.H."/>
            <person name="Jiang B.H."/>
        </authorList>
    </citation>
    <scope>FUNCTION</scope>
    <scope>TISSUE SPECIFICITY</scope>
    <scope>DISRUPTION PHENOTYPE</scope>
</reference>
<reference key="7">
    <citation type="journal article" date="2017" name="Sci. Rep.">
        <title>MKRN2 is a novel ubiquitin E3 ligase for the p65 subunit of NF-kappaB and negatively regulates inflammatory responses.</title>
        <authorList>
            <person name="Shin C."/>
            <person name="Ito Y."/>
            <person name="Ichikawa S."/>
            <person name="Tokunaga M."/>
            <person name="Sakata-Sogawa K."/>
            <person name="Tanaka T."/>
        </authorList>
    </citation>
    <scope>FUNCTION</scope>
    <scope>CATALYTIC ACTIVITY</scope>
    <scope>INTERACTION WITH PDLIM2 AND RELA</scope>
    <scope>SUBCELLULAR LOCATION</scope>
    <scope>TISSUE SPECIFICITY</scope>
</reference>
<keyword id="KW-0963">Cytoplasm</keyword>
<keyword id="KW-0221">Differentiation</keyword>
<keyword id="KW-0479">Metal-binding</keyword>
<keyword id="KW-0539">Nucleus</keyword>
<keyword id="KW-0597">Phosphoprotein</keyword>
<keyword id="KW-1185">Reference proteome</keyword>
<keyword id="KW-0677">Repeat</keyword>
<keyword id="KW-0744">Spermatogenesis</keyword>
<keyword id="KW-0808">Transferase</keyword>
<keyword id="KW-0833">Ubl conjugation pathway</keyword>
<keyword id="KW-0862">Zinc</keyword>
<keyword id="KW-0863">Zinc-finger</keyword>
<protein>
    <recommendedName>
        <fullName evidence="7">E3 ubiquitin-protein ligase makorin-2</fullName>
        <ecNumber evidence="6">2.3.2.27</ecNumber>
    </recommendedName>
    <alternativeName>
        <fullName evidence="7">RING-type E3 ubiquitin transferase makorin-2</fullName>
    </alternativeName>
</protein>
<accession>Q9ERV1</accession>
<accession>Q6GTY9</accession>
<accession>Q9D0L9</accession>
<feature type="chain" id="PRO_0000055956" description="E3 ubiquitin-protein ligase makorin-2">
    <location>
        <begin position="1"/>
        <end position="416"/>
    </location>
</feature>
<feature type="zinc finger region" description="C3H1-type 1" evidence="3">
    <location>
        <begin position="2"/>
        <end position="29"/>
    </location>
</feature>
<feature type="zinc finger region" description="C3H1-type 2" evidence="3">
    <location>
        <begin position="31"/>
        <end position="58"/>
    </location>
</feature>
<feature type="zinc finger region" description="C3H1-type 3" evidence="3">
    <location>
        <begin position="165"/>
        <end position="192"/>
    </location>
</feature>
<feature type="zinc finger region" description="RING-type" evidence="2">
    <location>
        <begin position="238"/>
        <end position="292"/>
    </location>
</feature>
<feature type="zinc finger region" description="C3H1-type 4" evidence="3">
    <location>
        <begin position="321"/>
        <end position="350"/>
    </location>
</feature>
<feature type="region of interest" description="Disordered" evidence="4">
    <location>
        <begin position="61"/>
        <end position="144"/>
    </location>
</feature>
<feature type="region of interest" description="Makorin-type Cys-His">
    <location>
        <begin position="193"/>
        <end position="222"/>
    </location>
</feature>
<feature type="compositionally biased region" description="Basic and acidic residues" evidence="4">
    <location>
        <begin position="95"/>
        <end position="123"/>
    </location>
</feature>
<feature type="modified residue" description="Phosphoserine" evidence="1">
    <location>
        <position position="139"/>
    </location>
</feature>
<feature type="sequence conflict" description="In Ref. 1; AAG27596." evidence="7" ref="1">
    <original>F</original>
    <variation>L</variation>
    <location>
        <position position="181"/>
    </location>
</feature>